<feature type="chain" id="PRO_0000351663" description="Probable serine/threonine-protein kinase WNK5">
    <location>
        <begin position="1"/>
        <end position="549"/>
    </location>
</feature>
<feature type="domain" description="Protein kinase" evidence="4">
    <location>
        <begin position="25"/>
        <end position="283"/>
    </location>
</feature>
<feature type="region of interest" description="Disordered" evidence="5">
    <location>
        <begin position="414"/>
        <end position="490"/>
    </location>
</feature>
<feature type="region of interest" description="Disordered" evidence="5">
    <location>
        <begin position="525"/>
        <end position="549"/>
    </location>
</feature>
<feature type="compositionally biased region" description="Acidic residues" evidence="5">
    <location>
        <begin position="452"/>
        <end position="463"/>
    </location>
</feature>
<feature type="compositionally biased region" description="Low complexity" evidence="5">
    <location>
        <begin position="467"/>
        <end position="476"/>
    </location>
</feature>
<feature type="compositionally biased region" description="Polar residues" evidence="5">
    <location>
        <begin position="531"/>
        <end position="549"/>
    </location>
</feature>
<feature type="active site" description="Proton acceptor" evidence="2">
    <location>
        <position position="172"/>
    </location>
</feature>
<feature type="binding site" evidence="1">
    <location>
        <begin position="105"/>
        <end position="108"/>
    </location>
    <ligand>
        <name>ATP</name>
        <dbReference type="ChEBI" id="CHEBI:30616"/>
    </ligand>
</feature>
<feature type="binding site" evidence="1">
    <location>
        <position position="155"/>
    </location>
    <ligand>
        <name>ATP</name>
        <dbReference type="ChEBI" id="CHEBI:30616"/>
    </ligand>
</feature>
<feature type="modified residue" description="Phosphoserine" evidence="3">
    <location>
        <position position="504"/>
    </location>
</feature>
<comment type="function">
    <text evidence="7">Regulates flowering time by modulating the photoperiod pathway.</text>
</comment>
<comment type="catalytic activity">
    <reaction>
        <text>L-seryl-[protein] + ATP = O-phospho-L-seryl-[protein] + ADP + H(+)</text>
        <dbReference type="Rhea" id="RHEA:17989"/>
        <dbReference type="Rhea" id="RHEA-COMP:9863"/>
        <dbReference type="Rhea" id="RHEA-COMP:11604"/>
        <dbReference type="ChEBI" id="CHEBI:15378"/>
        <dbReference type="ChEBI" id="CHEBI:29999"/>
        <dbReference type="ChEBI" id="CHEBI:30616"/>
        <dbReference type="ChEBI" id="CHEBI:83421"/>
        <dbReference type="ChEBI" id="CHEBI:456216"/>
        <dbReference type="EC" id="2.7.11.1"/>
    </reaction>
</comment>
<comment type="catalytic activity">
    <reaction>
        <text>L-threonyl-[protein] + ATP = O-phospho-L-threonyl-[protein] + ADP + H(+)</text>
        <dbReference type="Rhea" id="RHEA:46608"/>
        <dbReference type="Rhea" id="RHEA-COMP:11060"/>
        <dbReference type="Rhea" id="RHEA-COMP:11605"/>
        <dbReference type="ChEBI" id="CHEBI:15378"/>
        <dbReference type="ChEBI" id="CHEBI:30013"/>
        <dbReference type="ChEBI" id="CHEBI:30616"/>
        <dbReference type="ChEBI" id="CHEBI:61977"/>
        <dbReference type="ChEBI" id="CHEBI:456216"/>
        <dbReference type="EC" id="2.7.11.1"/>
    </reaction>
</comment>
<comment type="subunit">
    <text evidence="6">Interacts with AHK4.</text>
</comment>
<comment type="interaction">
    <interactant intactId="EBI-1807651">
        <id>Q9SCU5</id>
    </interactant>
    <interactant intactId="EBI-1100775">
        <id>Q9C5U0</id>
        <label>AHK4</label>
    </interactant>
    <organismsDiffer>false</organismsDiffer>
    <experiments>2</experiments>
</comment>
<comment type="interaction">
    <interactant intactId="EBI-1807651">
        <id>Q9SCU5</id>
    </interactant>
    <interactant intactId="EBI-2349513">
        <id>Q84MC7</id>
        <label>PYL9</label>
    </interactant>
    <organismsDiffer>false</organismsDiffer>
    <experiments>3</experiments>
</comment>
<comment type="disruption phenotype">
    <text evidence="7">Plants display early flowering and altered expression of genes involved in the photoperiod flowering pathway, such as ELF4, TOC1, CO and FT.</text>
</comment>
<comment type="similarity">
    <text evidence="4">Belongs to the protein kinase superfamily. Ser/Thr protein kinase family. WNK subfamily.</text>
</comment>
<comment type="caution">
    <text evidence="1">Was named WNK/'with no lysine(K)' because key residues for catalysis, including the lysine involved in ATP binding, are either not conserved or differ compared to the residues described in other kinase family proteins.</text>
</comment>
<comment type="sequence caution" evidence="8">
    <conflict type="erroneous initiation">
        <sequence resource="EMBL-CDS" id="BAB91128"/>
    </conflict>
    <text>Truncated N-terminus.</text>
</comment>
<comment type="sequence caution" evidence="8">
    <conflict type="erroneous initiation">
        <sequence resource="EMBL-CDS" id="CAB63149"/>
    </conflict>
    <text>Truncated N-terminus.</text>
</comment>
<sequence length="549" mass="62658">MYMEISSASDDSIAYVETDPSGRYGRFREVLGKGAMKTVYKAFDQVLGMEVAWNQVKLNEVFRSPEPLQRLYSEVHLLKNLNHESIIRYCTSWIDVNRRTFNFITELFTSGTLREYRRKYQKVDIRAIKSWARQILNGLAYLHGHDPPVIHRDLKCDNIFVNGHLGQVKIGDLGLAAILRGSQNAHSVIGTPEFMAPELYEEDYNELVDIYSFGMCVLEMLTGEYPYSECTNPAQIYKKVTSGKLPDSFHLIQHTEAQRFVGKCLETVSRRLPAKELLADPFLAATDERDLAPLFRLPQQLAIQNLAANGTVVEHLPSTTDPTRTTDMSITGKMNSEDHTIFLQVQILDGDGHMRNIQFPFNILSDTPLEVALEMVKELEITDWDPLEIAAMIENEISLLVPNWRANDSSIRHESFGHEDDEDNGDTEGRTRLFSSASSSHDSPVAVRENNDDSSNDVIPDMDDGNRSSNRLLNSSTYHYSPAIDDDQNQQQRRRVRLQQKMRSLVDTRTQVLHRSLMELINKRRGRGFDPNTNELQPQPSSTDFIRRC</sequence>
<dbReference type="EC" id="2.7.11.1"/>
<dbReference type="EMBL" id="AB084269">
    <property type="protein sequence ID" value="BAB91128.1"/>
    <property type="status" value="ALT_INIT"/>
    <property type="molecule type" value="mRNA"/>
</dbReference>
<dbReference type="EMBL" id="AJ238802">
    <property type="protein sequence ID" value="CAB43520.1"/>
    <property type="molecule type" value="mRNA"/>
</dbReference>
<dbReference type="EMBL" id="AL132968">
    <property type="protein sequence ID" value="CAB63149.1"/>
    <property type="status" value="ALT_INIT"/>
    <property type="molecule type" value="Genomic_DNA"/>
</dbReference>
<dbReference type="EMBL" id="CP002686">
    <property type="protein sequence ID" value="AEE78815.1"/>
    <property type="molecule type" value="Genomic_DNA"/>
</dbReference>
<dbReference type="EMBL" id="CP002686">
    <property type="protein sequence ID" value="AEE78816.1"/>
    <property type="molecule type" value="Genomic_DNA"/>
</dbReference>
<dbReference type="PIR" id="T46059">
    <property type="entry name" value="T46059"/>
</dbReference>
<dbReference type="PIR" id="T51099">
    <property type="entry name" value="T51099"/>
</dbReference>
<dbReference type="RefSeq" id="NP_001190056.1">
    <property type="nucleotide sequence ID" value="NM_001203127.1"/>
</dbReference>
<dbReference type="RefSeq" id="NP_566954.2">
    <property type="nucleotide sequence ID" value="NM_115022.3"/>
</dbReference>
<dbReference type="SMR" id="Q9SCU5"/>
<dbReference type="BioGRID" id="9644">
    <property type="interactions" value="6"/>
</dbReference>
<dbReference type="FunCoup" id="Q9SCU5">
    <property type="interactions" value="2144"/>
</dbReference>
<dbReference type="IntAct" id="Q9SCU5">
    <property type="interactions" value="2"/>
</dbReference>
<dbReference type="STRING" id="3702.Q9SCU5"/>
<dbReference type="iPTMnet" id="Q9SCU5"/>
<dbReference type="PaxDb" id="3702-AT3G51630.1"/>
<dbReference type="ProteomicsDB" id="243083"/>
<dbReference type="EnsemblPlants" id="AT3G51630.1">
    <property type="protein sequence ID" value="AT3G51630.1"/>
    <property type="gene ID" value="AT3G51630"/>
</dbReference>
<dbReference type="EnsemblPlants" id="AT3G51630.2">
    <property type="protein sequence ID" value="AT3G51630.2"/>
    <property type="gene ID" value="AT3G51630"/>
</dbReference>
<dbReference type="GeneID" id="824326"/>
<dbReference type="Gramene" id="AT3G51630.1">
    <property type="protein sequence ID" value="AT3G51630.1"/>
    <property type="gene ID" value="AT3G51630"/>
</dbReference>
<dbReference type="Gramene" id="AT3G51630.2">
    <property type="protein sequence ID" value="AT3G51630.2"/>
    <property type="gene ID" value="AT3G51630"/>
</dbReference>
<dbReference type="KEGG" id="ath:AT3G51630"/>
<dbReference type="Araport" id="AT3G51630"/>
<dbReference type="TAIR" id="AT3G51630">
    <property type="gene designation" value="WNK5"/>
</dbReference>
<dbReference type="eggNOG" id="KOG0584">
    <property type="taxonomic scope" value="Eukaryota"/>
</dbReference>
<dbReference type="HOGENOM" id="CLU_000288_142_1_1"/>
<dbReference type="InParanoid" id="Q9SCU5"/>
<dbReference type="OMA" id="YSNLNYC"/>
<dbReference type="PhylomeDB" id="Q9SCU5"/>
<dbReference type="PRO" id="PR:Q9SCU5"/>
<dbReference type="Proteomes" id="UP000006548">
    <property type="component" value="Chromosome 3"/>
</dbReference>
<dbReference type="ExpressionAtlas" id="Q9SCU5">
    <property type="expression patterns" value="baseline and differential"/>
</dbReference>
<dbReference type="GO" id="GO:0005524">
    <property type="term" value="F:ATP binding"/>
    <property type="evidence" value="ECO:0007669"/>
    <property type="project" value="UniProtKB-KW"/>
</dbReference>
<dbReference type="GO" id="GO:0043424">
    <property type="term" value="F:protein histidine kinase binding"/>
    <property type="evidence" value="ECO:0000353"/>
    <property type="project" value="UniProtKB"/>
</dbReference>
<dbReference type="GO" id="GO:0004672">
    <property type="term" value="F:protein kinase activity"/>
    <property type="evidence" value="ECO:0000304"/>
    <property type="project" value="TAIR"/>
</dbReference>
<dbReference type="GO" id="GO:0106310">
    <property type="term" value="F:protein serine kinase activity"/>
    <property type="evidence" value="ECO:0007669"/>
    <property type="project" value="RHEA"/>
</dbReference>
<dbReference type="GO" id="GO:0004674">
    <property type="term" value="F:protein serine/threonine kinase activity"/>
    <property type="evidence" value="ECO:0007669"/>
    <property type="project" value="UniProtKB-KW"/>
</dbReference>
<dbReference type="GO" id="GO:0048573">
    <property type="term" value="P:photoperiodism, flowering"/>
    <property type="evidence" value="ECO:0000315"/>
    <property type="project" value="TAIR"/>
</dbReference>
<dbReference type="GO" id="GO:0006468">
    <property type="term" value="P:protein phosphorylation"/>
    <property type="evidence" value="ECO:0000304"/>
    <property type="project" value="TAIR"/>
</dbReference>
<dbReference type="CDD" id="cd13983">
    <property type="entry name" value="STKc_WNK"/>
    <property type="match status" value="1"/>
</dbReference>
<dbReference type="FunFam" id="3.30.200.20:FF:000075">
    <property type="entry name" value="Probable serine/threonine-protein kinase WNK1"/>
    <property type="match status" value="1"/>
</dbReference>
<dbReference type="FunFam" id="1.10.510.10:FF:000046">
    <property type="entry name" value="probable serine/threonine-protein kinase WNK9"/>
    <property type="match status" value="1"/>
</dbReference>
<dbReference type="Gene3D" id="3.10.20.90">
    <property type="entry name" value="Phosphatidylinositol 3-kinase Catalytic Subunit, Chain A, domain 1"/>
    <property type="match status" value="1"/>
</dbReference>
<dbReference type="Gene3D" id="3.30.200.20">
    <property type="entry name" value="Phosphorylase Kinase, domain 1"/>
    <property type="match status" value="1"/>
</dbReference>
<dbReference type="Gene3D" id="1.10.510.10">
    <property type="entry name" value="Transferase(Phosphotransferase) domain 1"/>
    <property type="match status" value="1"/>
</dbReference>
<dbReference type="InterPro" id="IPR011009">
    <property type="entry name" value="Kinase-like_dom_sf"/>
</dbReference>
<dbReference type="InterPro" id="IPR000719">
    <property type="entry name" value="Prot_kinase_dom"/>
</dbReference>
<dbReference type="InterPro" id="IPR008271">
    <property type="entry name" value="Ser/Thr_kinase_AS"/>
</dbReference>
<dbReference type="InterPro" id="IPR050588">
    <property type="entry name" value="WNK_Ser-Thr_kinase"/>
</dbReference>
<dbReference type="PANTHER" id="PTHR13902">
    <property type="entry name" value="SERINE/THREONINE-PROTEIN KINASE WNK WITH NO LYSINE -RELATED"/>
    <property type="match status" value="1"/>
</dbReference>
<dbReference type="Pfam" id="PF00069">
    <property type="entry name" value="Pkinase"/>
    <property type="match status" value="1"/>
</dbReference>
<dbReference type="SMART" id="SM00220">
    <property type="entry name" value="S_TKc"/>
    <property type="match status" value="1"/>
</dbReference>
<dbReference type="SUPFAM" id="SSF56112">
    <property type="entry name" value="Protein kinase-like (PK-like)"/>
    <property type="match status" value="1"/>
</dbReference>
<dbReference type="PROSITE" id="PS50011">
    <property type="entry name" value="PROTEIN_KINASE_DOM"/>
    <property type="match status" value="1"/>
</dbReference>
<dbReference type="PROSITE" id="PS00108">
    <property type="entry name" value="PROTEIN_KINASE_ST"/>
    <property type="match status" value="1"/>
</dbReference>
<reference key="1">
    <citation type="journal article" date="2002" name="Biosci. Biotechnol. Biochem.">
        <title>Compilation and characterization of a novel WNK family of protein kinases in Arabiodpsis thaliana with reference to circadian rhythms.</title>
        <authorList>
            <person name="Nakamichi N."/>
            <person name="Murakami-Kojima M."/>
            <person name="Sato E."/>
            <person name="Kishi Y."/>
            <person name="Yamashino T."/>
            <person name="Mizuno T."/>
        </authorList>
    </citation>
    <scope>NUCLEOTIDE SEQUENCE [MRNA]</scope>
    <source>
        <strain>cv. Columbia</strain>
    </source>
</reference>
<reference key="2">
    <citation type="submission" date="1999-05" db="EMBL/GenBank/DDBJ databases">
        <title>Analysis of Arabidopsis thaliana gene structure by cognate cDNA sequencing.</title>
        <authorList>
            <person name="Cooke R.M."/>
            <person name="Laudie M."/>
            <person name="Berger C."/>
            <person name="Delseny M."/>
        </authorList>
    </citation>
    <scope>NUCLEOTIDE SEQUENCE [MRNA]</scope>
</reference>
<reference key="3">
    <citation type="journal article" date="2000" name="Nature">
        <title>Sequence and analysis of chromosome 3 of the plant Arabidopsis thaliana.</title>
        <authorList>
            <person name="Salanoubat M."/>
            <person name="Lemcke K."/>
            <person name="Rieger M."/>
            <person name="Ansorge W."/>
            <person name="Unseld M."/>
            <person name="Fartmann B."/>
            <person name="Valle G."/>
            <person name="Bloecker H."/>
            <person name="Perez-Alonso M."/>
            <person name="Obermaier B."/>
            <person name="Delseny M."/>
            <person name="Boutry M."/>
            <person name="Grivell L.A."/>
            <person name="Mache R."/>
            <person name="Puigdomenech P."/>
            <person name="De Simone V."/>
            <person name="Choisne N."/>
            <person name="Artiguenave F."/>
            <person name="Robert C."/>
            <person name="Brottier P."/>
            <person name="Wincker P."/>
            <person name="Cattolico L."/>
            <person name="Weissenbach J."/>
            <person name="Saurin W."/>
            <person name="Quetier F."/>
            <person name="Schaefer M."/>
            <person name="Mueller-Auer S."/>
            <person name="Gabel C."/>
            <person name="Fuchs M."/>
            <person name="Benes V."/>
            <person name="Wurmbach E."/>
            <person name="Drzonek H."/>
            <person name="Erfle H."/>
            <person name="Jordan N."/>
            <person name="Bangert S."/>
            <person name="Wiedelmann R."/>
            <person name="Kranz H."/>
            <person name="Voss H."/>
            <person name="Holland R."/>
            <person name="Brandt P."/>
            <person name="Nyakatura G."/>
            <person name="Vezzi A."/>
            <person name="D'Angelo M."/>
            <person name="Pallavicini A."/>
            <person name="Toppo S."/>
            <person name="Simionati B."/>
            <person name="Conrad A."/>
            <person name="Hornischer K."/>
            <person name="Kauer G."/>
            <person name="Loehnert T.-H."/>
            <person name="Nordsiek G."/>
            <person name="Reichelt J."/>
            <person name="Scharfe M."/>
            <person name="Schoen O."/>
            <person name="Bargues M."/>
            <person name="Terol J."/>
            <person name="Climent J."/>
            <person name="Navarro P."/>
            <person name="Collado C."/>
            <person name="Perez-Perez A."/>
            <person name="Ottenwaelder B."/>
            <person name="Duchemin D."/>
            <person name="Cooke R."/>
            <person name="Laudie M."/>
            <person name="Berger-Llauro C."/>
            <person name="Purnelle B."/>
            <person name="Masuy D."/>
            <person name="de Haan M."/>
            <person name="Maarse A.C."/>
            <person name="Alcaraz J.-P."/>
            <person name="Cottet A."/>
            <person name="Casacuberta E."/>
            <person name="Monfort A."/>
            <person name="Argiriou A."/>
            <person name="Flores M."/>
            <person name="Liguori R."/>
            <person name="Vitale D."/>
            <person name="Mannhaupt G."/>
            <person name="Haase D."/>
            <person name="Schoof H."/>
            <person name="Rudd S."/>
            <person name="Zaccaria P."/>
            <person name="Mewes H.-W."/>
            <person name="Mayer K.F.X."/>
            <person name="Kaul S."/>
            <person name="Town C.D."/>
            <person name="Koo H.L."/>
            <person name="Tallon L.J."/>
            <person name="Jenkins J."/>
            <person name="Rooney T."/>
            <person name="Rizzo M."/>
            <person name="Walts A."/>
            <person name="Utterback T."/>
            <person name="Fujii C.Y."/>
            <person name="Shea T.P."/>
            <person name="Creasy T.H."/>
            <person name="Haas B."/>
            <person name="Maiti R."/>
            <person name="Wu D."/>
            <person name="Peterson J."/>
            <person name="Van Aken S."/>
            <person name="Pai G."/>
            <person name="Militscher J."/>
            <person name="Sellers P."/>
            <person name="Gill J.E."/>
            <person name="Feldblyum T.V."/>
            <person name="Preuss D."/>
            <person name="Lin X."/>
            <person name="Nierman W.C."/>
            <person name="Salzberg S.L."/>
            <person name="White O."/>
            <person name="Venter J.C."/>
            <person name="Fraser C.M."/>
            <person name="Kaneko T."/>
            <person name="Nakamura Y."/>
            <person name="Sato S."/>
            <person name="Kato T."/>
            <person name="Asamizu E."/>
            <person name="Sasamoto S."/>
            <person name="Kimura T."/>
            <person name="Idesawa K."/>
            <person name="Kawashima K."/>
            <person name="Kishida Y."/>
            <person name="Kiyokawa C."/>
            <person name="Kohara M."/>
            <person name="Matsumoto M."/>
            <person name="Matsuno A."/>
            <person name="Muraki A."/>
            <person name="Nakayama S."/>
            <person name="Nakazaki N."/>
            <person name="Shinpo S."/>
            <person name="Takeuchi C."/>
            <person name="Wada T."/>
            <person name="Watanabe A."/>
            <person name="Yamada M."/>
            <person name="Yasuda M."/>
            <person name="Tabata S."/>
        </authorList>
    </citation>
    <scope>NUCLEOTIDE SEQUENCE [LARGE SCALE GENOMIC DNA]</scope>
    <source>
        <strain>cv. Columbia</strain>
    </source>
</reference>
<reference key="4">
    <citation type="journal article" date="2017" name="Plant J.">
        <title>Araport11: a complete reannotation of the Arabidopsis thaliana reference genome.</title>
        <authorList>
            <person name="Cheng C.Y."/>
            <person name="Krishnakumar V."/>
            <person name="Chan A.P."/>
            <person name="Thibaud-Nissen F."/>
            <person name="Schobel S."/>
            <person name="Town C.D."/>
        </authorList>
    </citation>
    <scope>GENOME REANNOTATION</scope>
    <source>
        <strain>cv. Columbia</strain>
    </source>
</reference>
<reference key="5">
    <citation type="journal article" date="2008" name="J. Proteome Res.">
        <title>Toward an interaction map of the two-component signaling pathway of Arabidopsis thaliana.</title>
        <authorList>
            <person name="Dortay H."/>
            <person name="Gruhn N."/>
            <person name="Pfeifer A."/>
            <person name="Schwerdtner M."/>
            <person name="Schmuelling T."/>
            <person name="Heyl A."/>
        </authorList>
    </citation>
    <scope>INTERACTION WITH AHK4</scope>
</reference>
<reference key="6">
    <citation type="journal article" date="2008" name="Plant Biol.">
        <title>The plant WNK gene family and regulation of flowering time in Arabidopsis.</title>
        <authorList>
            <person name="Wang Y."/>
            <person name="Liu K."/>
            <person name="Liao H."/>
            <person name="Zhuang C."/>
            <person name="Ma H."/>
            <person name="Yan X."/>
        </authorList>
    </citation>
    <scope>FUNCTION</scope>
    <scope>DISRUPTION PHENOTYPE</scope>
</reference>
<name>WNK5_ARATH</name>
<organism>
    <name type="scientific">Arabidopsis thaliana</name>
    <name type="common">Mouse-ear cress</name>
    <dbReference type="NCBI Taxonomy" id="3702"/>
    <lineage>
        <taxon>Eukaryota</taxon>
        <taxon>Viridiplantae</taxon>
        <taxon>Streptophyta</taxon>
        <taxon>Embryophyta</taxon>
        <taxon>Tracheophyta</taxon>
        <taxon>Spermatophyta</taxon>
        <taxon>Magnoliopsida</taxon>
        <taxon>eudicotyledons</taxon>
        <taxon>Gunneridae</taxon>
        <taxon>Pentapetalae</taxon>
        <taxon>rosids</taxon>
        <taxon>malvids</taxon>
        <taxon>Brassicales</taxon>
        <taxon>Brassicaceae</taxon>
        <taxon>Camelineae</taxon>
        <taxon>Arabidopsis</taxon>
    </lineage>
</organism>
<accession>Q9SCU5</accession>
<accession>Q9XFS5</accession>
<evidence type="ECO:0000250" key="1">
    <source>
        <dbReference type="UniProtKB" id="Q9H4A3"/>
    </source>
</evidence>
<evidence type="ECO:0000250" key="2">
    <source>
        <dbReference type="UniProtKB" id="Q9JIH7"/>
    </source>
</evidence>
<evidence type="ECO:0000250" key="3">
    <source>
        <dbReference type="UniProtKB" id="Q9LVL5"/>
    </source>
</evidence>
<evidence type="ECO:0000255" key="4">
    <source>
        <dbReference type="PROSITE-ProRule" id="PRU00159"/>
    </source>
</evidence>
<evidence type="ECO:0000256" key="5">
    <source>
        <dbReference type="SAM" id="MobiDB-lite"/>
    </source>
</evidence>
<evidence type="ECO:0000269" key="6">
    <source>
    </source>
</evidence>
<evidence type="ECO:0000269" key="7">
    <source>
    </source>
</evidence>
<evidence type="ECO:0000305" key="8"/>
<proteinExistence type="evidence at protein level"/>
<protein>
    <recommendedName>
        <fullName>Probable serine/threonine-protein kinase WNK5</fullName>
        <shortName>AtWNK5</shortName>
        <ecNumber>2.7.11.1</ecNumber>
    </recommendedName>
    <alternativeName>
        <fullName>Protein kinase with no lysine 5</fullName>
    </alternativeName>
</protein>
<keyword id="KW-0067">ATP-binding</keyword>
<keyword id="KW-0418">Kinase</keyword>
<keyword id="KW-0547">Nucleotide-binding</keyword>
<keyword id="KW-0597">Phosphoprotein</keyword>
<keyword id="KW-1185">Reference proteome</keyword>
<keyword id="KW-0723">Serine/threonine-protein kinase</keyword>
<keyword id="KW-0808">Transferase</keyword>
<gene>
    <name type="primary">WNK5</name>
    <name type="ordered locus">At3g51630</name>
    <name type="ORF">T18N14.10</name>
</gene>